<reference key="1">
    <citation type="journal article" date="1987" name="Gene">
        <title>Nucleotide sequence analysis of the gene for protein A from Staphylococcus aureus Cowan 1 (NCTC8530) and its enhanced expression in Escherichia coli.</title>
        <authorList>
            <person name="Shuttleworth H.L."/>
            <person name="Duggleby C.J."/>
            <person name="Jones S.A."/>
            <person name="Atkinson T."/>
            <person name="Minton N.P."/>
        </authorList>
    </citation>
    <scope>NUCLEOTIDE SEQUENCE [GENOMIC DNA]</scope>
    <source>
        <strain>ATCC 12598 / Cowan 1 / DSM 20372 / NCIMB 11787 / NCTC 8530</strain>
    </source>
</reference>
<reference key="2">
    <citation type="journal article" date="1977" name="Eur. J. Biochem.">
        <title>Structural studies on the four repetitive Fc-binding regions in protein A from Staphylococcus aureus.</title>
        <authorList>
            <person name="Sjoedahl J."/>
        </authorList>
    </citation>
    <scope>PARTIAL PROTEIN SEQUENCE</scope>
    <source>
        <strain>ATCC 12598 / Cowan 1 / DSM 20372 / NCIMB 11787 / NCTC 8530</strain>
    </source>
</reference>
<reference evidence="8 9" key="3">
    <citation type="journal article" date="1992" name="Biochemistry">
        <title>Three-dimensional solution structure of the B domain of staphylococcal protein A: comparisons of the solution and crystal structures.</title>
        <authorList>
            <person name="Gouda H."/>
            <person name="Torigoe H."/>
            <person name="Saito A."/>
            <person name="Sato M."/>
            <person name="Arata Y."/>
            <person name="Shimada I."/>
        </authorList>
    </citation>
    <scope>STRUCTURE BY NMR OF 212-270</scope>
</reference>
<reference evidence="10 11 12 13" key="4">
    <citation type="journal article" date="1996" name="Biochemistry">
        <title>Solution structure of the E-domain of staphylococcal protein A.</title>
        <authorList>
            <person name="Starovasnik M.A."/>
            <person name="Skelton N.J."/>
            <person name="O'Connell M.P."/>
            <person name="Kelley R.F."/>
            <person name="Reilly D."/>
            <person name="Fairbrother W.J."/>
        </authorList>
    </citation>
    <scope>STRUCTURE BY NMR OF 37-92</scope>
</reference>
<reference evidence="14" key="5">
    <citation type="journal article" date="1997" name="J. Mol. Biol.">
        <title>High-resolution solution NMR structure of the Z domain of staphylococcal protein A.</title>
        <authorList>
            <person name="Tashiro M."/>
            <person name="Tejero R."/>
            <person name="Zimmerman D.E."/>
            <person name="Celda B."/>
            <person name="Nilsson B."/>
            <person name="Montelione G.T."/>
        </authorList>
    </citation>
    <scope>STRUCTURE BY NMR OF 212-269</scope>
</reference>
<comment type="function">
    <text evidence="1 2">Plays a role in the inhibition of the host innate and adaptive immune responses. Possesses five immunoglobulin-binding domains that capture both the fragment crystallizable region (Fc region) and the Fab region (part of Ig that identifies antigen) of immunoglobulins (By similarity). In turn, Staphylococcus aureus is protected from phagocytic killing via inhibition of Ig Fc region. In addition, the host elicited B-cell response is prevented due to a decrease of antibody-secreting cell proliferation that enter the bone marrow, thereby decreasing long-term antibody production. Inhibits osteogenesis by preventing osteoblast proliferation and expression of alkaline phosphatase, type I collagen, osteopontin and osteocalcin. Acts directly as a pro-inflammatory factor in the lung through its ability to bind and activate tumor necrosis factor alpha receptor 1/TNFRSF1A (By similarity).</text>
</comment>
<comment type="subunit">
    <text evidence="1">Interacts with host TNFRSF1A; this interaction leads to the stimulation of both surface expression and shedding of TNFRSF1A.</text>
</comment>
<comment type="subcellular location">
    <subcellularLocation>
        <location evidence="4">Secreted</location>
        <location evidence="4">Cell wall</location>
        <topology evidence="4">Peptidoglycan-anchor</topology>
    </subcellularLocation>
    <text evidence="2">Anchored to the cell wall by sortase A.</text>
</comment>
<comment type="domain">
    <text evidence="2">Each of the immunoglobulin-binding region repeats can bind the Fc region of an immunoglobulin.</text>
</comment>
<comment type="biotechnology">
    <text evidence="7">Important immunodiagnostic reagent because of its ability to bind the Fab and Fc fragments of a wide range of mammalian immunoglobulins.</text>
</comment>
<comment type="similarity">
    <text evidence="7">Belongs to the immunoglobulin-binding protein SpA family.</text>
</comment>
<protein>
    <recommendedName>
        <fullName>Immunoglobulin G-binding protein A</fullName>
        <shortName>IgG-binding protein A</shortName>
    </recommendedName>
    <alternativeName>
        <fullName>Staphylococcal protein A</fullName>
        <shortName>SpA</shortName>
    </alternativeName>
</protein>
<dbReference type="EMBL" id="M18264">
    <property type="protein sequence ID" value="AAA26677.1"/>
    <property type="molecule type" value="Genomic_DNA"/>
</dbReference>
<dbReference type="PIR" id="A29605">
    <property type="entry name" value="A29605"/>
</dbReference>
<dbReference type="RefSeq" id="WP_047211818.1">
    <property type="nucleotide sequence ID" value="NZ_JYAJ02000001.1"/>
</dbReference>
<dbReference type="PDB" id="1BDC">
    <property type="method" value="NMR"/>
    <property type="chains" value="A=212-270"/>
</dbReference>
<dbReference type="PDB" id="1BDD">
    <property type="method" value="NMR"/>
    <property type="chains" value="A=212-270"/>
</dbReference>
<dbReference type="PDB" id="1EDI">
    <property type="method" value="NMR"/>
    <property type="chains" value="A=37-92"/>
</dbReference>
<dbReference type="PDB" id="1EDJ">
    <property type="method" value="NMR"/>
    <property type="chains" value="A=37-92"/>
</dbReference>
<dbReference type="PDB" id="1EDK">
    <property type="method" value="NMR"/>
    <property type="chains" value="A=37-92"/>
</dbReference>
<dbReference type="PDB" id="1EDL">
    <property type="method" value="NMR"/>
    <property type="chains" value="A=37-92"/>
</dbReference>
<dbReference type="PDB" id="1FC2">
    <property type="method" value="X-ray"/>
    <property type="resolution" value="2.80 A"/>
    <property type="chains" value="C=212-269"/>
</dbReference>
<dbReference type="PDB" id="1H0T">
    <property type="method" value="NMR"/>
    <property type="chains" value="A=213-269"/>
</dbReference>
<dbReference type="PDB" id="1LP1">
    <property type="method" value="X-ray"/>
    <property type="resolution" value="2.30 A"/>
    <property type="chains" value="B=212-269"/>
</dbReference>
<dbReference type="PDB" id="1Q2N">
    <property type="method" value="NMR"/>
    <property type="chains" value="A=212-269"/>
</dbReference>
<dbReference type="PDB" id="1SS1">
    <property type="method" value="NMR"/>
    <property type="chains" value="A=212-270"/>
</dbReference>
<dbReference type="PDB" id="2JWD">
    <property type="method" value="NMR"/>
    <property type="chains" value="A=213-269"/>
</dbReference>
<dbReference type="PDB" id="2M5A">
    <property type="method" value="NMR"/>
    <property type="chains" value="A=213-269"/>
</dbReference>
<dbReference type="PDB" id="2SPZ">
    <property type="method" value="NMR"/>
    <property type="chains" value="A=212-269"/>
</dbReference>
<dbReference type="PDB" id="3MZW">
    <property type="method" value="X-ray"/>
    <property type="resolution" value="2.90 A"/>
    <property type="chains" value="B=212-269"/>
</dbReference>
<dbReference type="PDB" id="4NPD">
    <property type="method" value="X-ray"/>
    <property type="resolution" value="0.90 A"/>
    <property type="chains" value="A=270-327"/>
</dbReference>
<dbReference type="PDB" id="4NPE">
    <property type="method" value="X-ray"/>
    <property type="resolution" value="1.42 A"/>
    <property type="chains" value="A=270-327"/>
</dbReference>
<dbReference type="PDB" id="4NPF">
    <property type="method" value="X-ray"/>
    <property type="resolution" value="1.49 A"/>
    <property type="chains" value="X/Y=154-269"/>
</dbReference>
<dbReference type="PDB" id="4WWI">
    <property type="method" value="X-ray"/>
    <property type="resolution" value="2.31 A"/>
    <property type="chains" value="A/B/C=270-327"/>
</dbReference>
<dbReference type="PDB" id="4Y4Y">
    <property type="method" value="X-ray"/>
    <property type="resolution" value="3.00 A"/>
    <property type="chains" value="A/B/C/D/E/F/G/H/I/J/K/L/M/N/O/P/Q/R/S/T/U/V/W/X/Y/Z/a/b/c/d=158-211, A/B/C/D/E/F/G/H/I/J/K/L/M/N/O/P/Q/R/S/T/U/V/W/X/Y/Z/a/b/c/d=219-459"/>
</dbReference>
<dbReference type="PDB" id="4Y5Z">
    <property type="method" value="X-ray"/>
    <property type="resolution" value="2.95 A"/>
    <property type="chains" value="0/1/2/3/4/5/6/7/A/B/C/D/E/F/G/H/I/J/K/L/M/N/O/P/Q/R/S/T/U/V=158-211, 0/1/2/3/4/5/6/7/A/B/C/D/E/F/G/H/I/J/K/L/M/N/O/P/Q/R/S/T/U/V=219-459"/>
</dbReference>
<dbReference type="PDB" id="4ZMD">
    <property type="method" value="X-ray"/>
    <property type="resolution" value="1.87 A"/>
    <property type="chains" value="A/B=270-327"/>
</dbReference>
<dbReference type="PDB" id="4ZNC">
    <property type="method" value="X-ray"/>
    <property type="resolution" value="2.28 A"/>
    <property type="chains" value="A/B/C=270-327"/>
</dbReference>
<dbReference type="PDB" id="5CBN">
    <property type="method" value="X-ray"/>
    <property type="resolution" value="2.30 A"/>
    <property type="chains" value="A=217-269"/>
</dbReference>
<dbReference type="PDB" id="5CBO">
    <property type="method" value="X-ray"/>
    <property type="resolution" value="2.80 A"/>
    <property type="chains" value="A/B/C/D/E/F/G/H/I/J/K/L=101-153"/>
</dbReference>
<dbReference type="PDB" id="5COC">
    <property type="method" value="X-ray"/>
    <property type="resolution" value="2.67 A"/>
    <property type="chains" value="A=213-267"/>
</dbReference>
<dbReference type="PDB" id="5EWX">
    <property type="method" value="X-ray"/>
    <property type="resolution" value="2.60 A"/>
    <property type="chains" value="A/B=212-266"/>
</dbReference>
<dbReference type="PDB" id="5H76">
    <property type="method" value="X-ray"/>
    <property type="resolution" value="2.60 A"/>
    <property type="chains" value="A/B/C=220-267"/>
</dbReference>
<dbReference type="PDB" id="5H79">
    <property type="method" value="X-ray"/>
    <property type="resolution" value="2.70 A"/>
    <property type="chains" value="C/D=40-210"/>
</dbReference>
<dbReference type="PDB" id="5H7A">
    <property type="method" value="X-ray"/>
    <property type="resolution" value="2.70 A"/>
    <property type="chains" value="A/B/C/D/E/F/G/H/I/J/K/L=157-209"/>
</dbReference>
<dbReference type="PDB" id="5H7B">
    <property type="method" value="X-ray"/>
    <property type="resolution" value="3.10 A"/>
    <property type="chains" value="A/B=157-209"/>
</dbReference>
<dbReference type="PDB" id="5H7C">
    <property type="method" value="X-ray"/>
    <property type="resolution" value="2.70 A"/>
    <property type="chains" value="A/C=99-324"/>
</dbReference>
<dbReference type="PDB" id="5H7D">
    <property type="method" value="X-ray"/>
    <property type="resolution" value="2.57 A"/>
    <property type="chains" value="A/B/C/D/I/J/M/N=220-267"/>
</dbReference>
<dbReference type="PDB" id="5X3F">
    <property type="method" value="X-ray"/>
    <property type="resolution" value="3.38 A"/>
    <property type="chains" value="A=220-269"/>
</dbReference>
<dbReference type="PDB" id="5XBY">
    <property type="method" value="X-ray"/>
    <property type="resolution" value="3.25 A"/>
    <property type="chains" value="A/B/C/D=217-269"/>
</dbReference>
<dbReference type="PDB" id="6KRV">
    <property type="method" value="X-ray"/>
    <property type="resolution" value="3.30 A"/>
    <property type="chains" value="D=212-269"/>
</dbReference>
<dbReference type="PDB" id="7EOY">
    <property type="method" value="EM"/>
    <property type="resolution" value="3.60 A"/>
    <property type="chains" value="A/B/C=154-269"/>
</dbReference>
<dbReference type="PDB" id="7EP6">
    <property type="method" value="EM"/>
    <property type="resolution" value="3.86 A"/>
    <property type="chains" value="A/B/C/D=154-269"/>
</dbReference>
<dbReference type="PDB" id="7FDJ">
    <property type="method" value="EM"/>
    <property type="resolution" value="4.40 A"/>
    <property type="chains" value="A/B/C/D=154-269"/>
</dbReference>
<dbReference type="PDB" id="7NHA">
    <property type="method" value="EM"/>
    <property type="resolution" value="2.91 A"/>
    <property type="chains" value="C=158-271"/>
</dbReference>
<dbReference type="PDB" id="7NHC">
    <property type="method" value="EM"/>
    <property type="resolution" value="2.87 A"/>
    <property type="chains" value="C=158-271"/>
</dbReference>
<dbReference type="PDB" id="7NHX">
    <property type="method" value="EM"/>
    <property type="resolution" value="3.23 A"/>
    <property type="chains" value="C=158-271"/>
</dbReference>
<dbReference type="PDB" id="7NI0">
    <property type="method" value="EM"/>
    <property type="resolution" value="3.32 A"/>
    <property type="chains" value="C=158-271"/>
</dbReference>
<dbReference type="PDB" id="7NIK">
    <property type="method" value="EM"/>
    <property type="resolution" value="6.20 A"/>
    <property type="chains" value="C=158-271"/>
</dbReference>
<dbReference type="PDB" id="7NIL">
    <property type="method" value="EM"/>
    <property type="resolution" value="5.01 A"/>
    <property type="chains" value="C=158-271"/>
</dbReference>
<dbReference type="PDB" id="7NIR">
    <property type="method" value="EM"/>
    <property type="resolution" value="6.70 A"/>
    <property type="chains" value="C=158-271"/>
</dbReference>
<dbReference type="PDB" id="7NIS">
    <property type="method" value="EM"/>
    <property type="resolution" value="5.96 A"/>
    <property type="chains" value="C=158-271"/>
</dbReference>
<dbReference type="PDB" id="7NJ3">
    <property type="method" value="EM"/>
    <property type="resolution" value="4.48 A"/>
    <property type="chains" value="C=158-271"/>
</dbReference>
<dbReference type="PDB" id="7NJ4">
    <property type="method" value="EM"/>
    <property type="resolution" value="5.84 A"/>
    <property type="chains" value="C=158-271"/>
</dbReference>
<dbReference type="PDB" id="7NJ5">
    <property type="method" value="EM"/>
    <property type="resolution" value="4.63 A"/>
    <property type="chains" value="C=158-271"/>
</dbReference>
<dbReference type="PDB" id="7NJ7">
    <property type="method" value="EM"/>
    <property type="resolution" value="4.82 A"/>
    <property type="chains" value="C=158-271"/>
</dbReference>
<dbReference type="PDB" id="7NK1">
    <property type="method" value="EM"/>
    <property type="resolution" value="4.22 A"/>
    <property type="chains" value="C=158-271"/>
</dbReference>
<dbReference type="PDB" id="7NK2">
    <property type="method" value="EM"/>
    <property type="resolution" value="4.84 A"/>
    <property type="chains" value="C=158-271"/>
</dbReference>
<dbReference type="PDB" id="8CPL">
    <property type="method" value="X-ray"/>
    <property type="resolution" value="1.60 A"/>
    <property type="chains" value="A/B/C/D=220-269"/>
</dbReference>
<dbReference type="PDBsum" id="1BDC"/>
<dbReference type="PDBsum" id="1BDD"/>
<dbReference type="PDBsum" id="1EDI"/>
<dbReference type="PDBsum" id="1EDJ"/>
<dbReference type="PDBsum" id="1EDK"/>
<dbReference type="PDBsum" id="1EDL"/>
<dbReference type="PDBsum" id="1FC2"/>
<dbReference type="PDBsum" id="1H0T"/>
<dbReference type="PDBsum" id="1LP1"/>
<dbReference type="PDBsum" id="1Q2N"/>
<dbReference type="PDBsum" id="1SS1"/>
<dbReference type="PDBsum" id="2JWD"/>
<dbReference type="PDBsum" id="2M5A"/>
<dbReference type="PDBsum" id="2SPZ"/>
<dbReference type="PDBsum" id="3MZW"/>
<dbReference type="PDBsum" id="4NPD"/>
<dbReference type="PDBsum" id="4NPE"/>
<dbReference type="PDBsum" id="4NPF"/>
<dbReference type="PDBsum" id="4WWI"/>
<dbReference type="PDBsum" id="4Y4Y"/>
<dbReference type="PDBsum" id="4Y5Z"/>
<dbReference type="PDBsum" id="4ZMD"/>
<dbReference type="PDBsum" id="4ZNC"/>
<dbReference type="PDBsum" id="5CBN"/>
<dbReference type="PDBsum" id="5CBO"/>
<dbReference type="PDBsum" id="5COC"/>
<dbReference type="PDBsum" id="5EWX"/>
<dbReference type="PDBsum" id="5H76"/>
<dbReference type="PDBsum" id="5H79"/>
<dbReference type="PDBsum" id="5H7A"/>
<dbReference type="PDBsum" id="5H7B"/>
<dbReference type="PDBsum" id="5H7C"/>
<dbReference type="PDBsum" id="5H7D"/>
<dbReference type="PDBsum" id="5X3F"/>
<dbReference type="PDBsum" id="5XBY"/>
<dbReference type="PDBsum" id="6KRV"/>
<dbReference type="PDBsum" id="7EOY"/>
<dbReference type="PDBsum" id="7EP6"/>
<dbReference type="PDBsum" id="7FDJ"/>
<dbReference type="PDBsum" id="7NHA"/>
<dbReference type="PDBsum" id="7NHC"/>
<dbReference type="PDBsum" id="7NHX"/>
<dbReference type="PDBsum" id="7NI0"/>
<dbReference type="PDBsum" id="7NIK"/>
<dbReference type="PDBsum" id="7NIL"/>
<dbReference type="PDBsum" id="7NIR"/>
<dbReference type="PDBsum" id="7NIS"/>
<dbReference type="PDBsum" id="7NJ3"/>
<dbReference type="PDBsum" id="7NJ4"/>
<dbReference type="PDBsum" id="7NJ5"/>
<dbReference type="PDBsum" id="7NJ7"/>
<dbReference type="PDBsum" id="7NK1"/>
<dbReference type="PDBsum" id="7NK2"/>
<dbReference type="PDBsum" id="8CPL"/>
<dbReference type="EMDB" id="EMD-12322"/>
<dbReference type="EMDB" id="EMD-12323"/>
<dbReference type="EMDB" id="EMD-12342"/>
<dbReference type="EMDB" id="EMD-12348"/>
<dbReference type="EMDB" id="EMD-12361"/>
<dbReference type="EMDB" id="EMD-12362"/>
<dbReference type="EMDB" id="EMD-12363"/>
<dbReference type="EMDB" id="EMD-12364"/>
<dbReference type="EMDB" id="EMD-12371"/>
<dbReference type="EMDB" id="EMD-12372"/>
<dbReference type="EMDB" id="EMD-12373"/>
<dbReference type="EMDB" id="EMD-12375"/>
<dbReference type="EMDB" id="EMD-12428"/>
<dbReference type="EMDB" id="EMD-12429"/>
<dbReference type="SMR" id="P38507"/>
<dbReference type="IntAct" id="P38507">
    <property type="interactions" value="1"/>
</dbReference>
<dbReference type="MINT" id="P38507"/>
<dbReference type="ABCD" id="P38507">
    <property type="antibodies" value="2 sequenced antibodies"/>
</dbReference>
<dbReference type="PATRIC" id="fig|1280.4807.peg.2341"/>
<dbReference type="EvolutionaryTrace" id="P38507"/>
<dbReference type="PRO" id="PR:P38507"/>
<dbReference type="GO" id="GO:0005576">
    <property type="term" value="C:extracellular region"/>
    <property type="evidence" value="ECO:0007669"/>
    <property type="project" value="UniProtKB-KW"/>
</dbReference>
<dbReference type="GO" id="GO:0019864">
    <property type="term" value="F:IgG binding"/>
    <property type="evidence" value="ECO:0007669"/>
    <property type="project" value="UniProtKB-KW"/>
</dbReference>
<dbReference type="CDD" id="cd00118">
    <property type="entry name" value="LysM"/>
    <property type="match status" value="1"/>
</dbReference>
<dbReference type="FunFam" id="1.20.5.420:FF:000003">
    <property type="entry name" value="Immunoglobulin G-binding protein A"/>
    <property type="match status" value="4"/>
</dbReference>
<dbReference type="Gene3D" id="1.20.5.420">
    <property type="entry name" value="Immunoglobulin FC, subunit C"/>
    <property type="match status" value="5"/>
</dbReference>
<dbReference type="Gene3D" id="3.10.350.10">
    <property type="entry name" value="LysM domain"/>
    <property type="match status" value="1"/>
</dbReference>
<dbReference type="InterPro" id="IPR009063">
    <property type="entry name" value="Ig/albumin-bd_sf"/>
</dbReference>
<dbReference type="InterPro" id="IPR019931">
    <property type="entry name" value="LPXTG_anchor"/>
</dbReference>
<dbReference type="InterPro" id="IPR018392">
    <property type="entry name" value="LysM_dom"/>
</dbReference>
<dbReference type="InterPro" id="IPR036779">
    <property type="entry name" value="LysM_dom_sf"/>
</dbReference>
<dbReference type="InterPro" id="IPR005038">
    <property type="entry name" value="Octapeptide"/>
</dbReference>
<dbReference type="InterPro" id="IPR003132">
    <property type="entry name" value="Protein_A_Ig-bd"/>
</dbReference>
<dbReference type="InterPro" id="IPR005877">
    <property type="entry name" value="YSIRK_signal_dom"/>
</dbReference>
<dbReference type="NCBIfam" id="TIGR01167">
    <property type="entry name" value="LPXTG_anchor"/>
    <property type="match status" value="1"/>
</dbReference>
<dbReference type="NCBIfam" id="TIGR01168">
    <property type="entry name" value="YSIRK_signal"/>
    <property type="match status" value="1"/>
</dbReference>
<dbReference type="Pfam" id="PF02216">
    <property type="entry name" value="B"/>
    <property type="match status" value="5"/>
</dbReference>
<dbReference type="Pfam" id="PF00746">
    <property type="entry name" value="Gram_pos_anchor"/>
    <property type="match status" value="1"/>
</dbReference>
<dbReference type="Pfam" id="PF01476">
    <property type="entry name" value="LysM"/>
    <property type="match status" value="1"/>
</dbReference>
<dbReference type="Pfam" id="PF03373">
    <property type="entry name" value="Octapeptide"/>
    <property type="match status" value="11"/>
</dbReference>
<dbReference type="Pfam" id="PF04650">
    <property type="entry name" value="YSIRK_signal"/>
    <property type="match status" value="1"/>
</dbReference>
<dbReference type="SMART" id="SM00257">
    <property type="entry name" value="LysM"/>
    <property type="match status" value="1"/>
</dbReference>
<dbReference type="SUPFAM" id="SSF46997">
    <property type="entry name" value="Bacterial immunoglobulin/albumin-binding domains"/>
    <property type="match status" value="5"/>
</dbReference>
<dbReference type="SUPFAM" id="SSF54106">
    <property type="entry name" value="LysM domain"/>
    <property type="match status" value="1"/>
</dbReference>
<dbReference type="PROSITE" id="PS50847">
    <property type="entry name" value="GRAM_POS_ANCHORING"/>
    <property type="match status" value="1"/>
</dbReference>
<dbReference type="PROSITE" id="PS51782">
    <property type="entry name" value="LYSM"/>
    <property type="match status" value="1"/>
</dbReference>
<organism>
    <name type="scientific">Staphylococcus aureus</name>
    <dbReference type="NCBI Taxonomy" id="1280"/>
    <lineage>
        <taxon>Bacteria</taxon>
        <taxon>Bacillati</taxon>
        <taxon>Bacillota</taxon>
        <taxon>Bacilli</taxon>
        <taxon>Bacillales</taxon>
        <taxon>Staphylococcaceae</taxon>
        <taxon>Staphylococcus</taxon>
    </lineage>
</organism>
<name>SPA_STAAU</name>
<proteinExistence type="evidence at protein level"/>
<evidence type="ECO:0000250" key="1">
    <source>
        <dbReference type="UniProtKB" id="A0A0H3K686"/>
    </source>
</evidence>
<evidence type="ECO:0000250" key="2">
    <source>
        <dbReference type="UniProtKB" id="P02976"/>
    </source>
</evidence>
<evidence type="ECO:0000255" key="3"/>
<evidence type="ECO:0000255" key="4">
    <source>
        <dbReference type="PROSITE-ProRule" id="PRU00477"/>
    </source>
</evidence>
<evidence type="ECO:0000255" key="5">
    <source>
        <dbReference type="PROSITE-ProRule" id="PRU01118"/>
    </source>
</evidence>
<evidence type="ECO:0000256" key="6">
    <source>
        <dbReference type="SAM" id="MobiDB-lite"/>
    </source>
</evidence>
<evidence type="ECO:0000305" key="7"/>
<evidence type="ECO:0007744" key="8">
    <source>
        <dbReference type="PDB" id="1BDC"/>
    </source>
</evidence>
<evidence type="ECO:0007744" key="9">
    <source>
        <dbReference type="PDB" id="1BDD"/>
    </source>
</evidence>
<evidence type="ECO:0007744" key="10">
    <source>
        <dbReference type="PDB" id="1EDI"/>
    </source>
</evidence>
<evidence type="ECO:0007744" key="11">
    <source>
        <dbReference type="PDB" id="1EDJ"/>
    </source>
</evidence>
<evidence type="ECO:0007744" key="12">
    <source>
        <dbReference type="PDB" id="1EDK"/>
    </source>
</evidence>
<evidence type="ECO:0007744" key="13">
    <source>
        <dbReference type="PDB" id="1EDL"/>
    </source>
</evidence>
<evidence type="ECO:0007744" key="14">
    <source>
        <dbReference type="PDB" id="2SPZ"/>
    </source>
</evidence>
<evidence type="ECO:0007829" key="15">
    <source>
        <dbReference type="PDB" id="1EDJ"/>
    </source>
</evidence>
<evidence type="ECO:0007829" key="16">
    <source>
        <dbReference type="PDB" id="1FC2"/>
    </source>
</evidence>
<evidence type="ECO:0007829" key="17">
    <source>
        <dbReference type="PDB" id="4NPD"/>
    </source>
</evidence>
<evidence type="ECO:0007829" key="18">
    <source>
        <dbReference type="PDB" id="4NPF"/>
    </source>
</evidence>
<evidence type="ECO:0007829" key="19">
    <source>
        <dbReference type="PDB" id="4ZMD"/>
    </source>
</evidence>
<evidence type="ECO:0007829" key="20">
    <source>
        <dbReference type="PDB" id="5H7A"/>
    </source>
</evidence>
<evidence type="ECO:0007829" key="21">
    <source>
        <dbReference type="PDB" id="5H7C"/>
    </source>
</evidence>
<gene>
    <name type="primary">spa</name>
</gene>
<feature type="signal peptide" evidence="3">
    <location>
        <begin position="1"/>
        <end position="36"/>
    </location>
</feature>
<feature type="chain" id="PRO_0000005655" description="Immunoglobulin G-binding protein A">
    <location>
        <begin position="37"/>
        <end position="477"/>
    </location>
</feature>
<feature type="propeptide" id="PRO_0000005656" description="Removed by sortase" evidence="2 4">
    <location>
        <begin position="478"/>
        <end position="508"/>
    </location>
</feature>
<feature type="repeat" description="Immunoglobulin-binding region E" evidence="2">
    <location>
        <begin position="37"/>
        <end position="92"/>
    </location>
</feature>
<feature type="repeat" description="Immunoglobulin-binding region D" evidence="2">
    <location>
        <begin position="93"/>
        <end position="153"/>
    </location>
</feature>
<feature type="repeat" description="Immunoglobulin-binding region A" evidence="2">
    <location>
        <begin position="154"/>
        <end position="211"/>
    </location>
</feature>
<feature type="repeat" description="Immunoglobulin-binding region B" evidence="2">
    <location>
        <begin position="212"/>
        <end position="269"/>
    </location>
</feature>
<feature type="repeat" description="Immunoglobulin-binding region C" evidence="2">
    <location>
        <begin position="270"/>
        <end position="327"/>
    </location>
</feature>
<feature type="repeat" description="2-1">
    <location>
        <begin position="333"/>
        <end position="340"/>
    </location>
</feature>
<feature type="repeat" description="2-2">
    <location>
        <begin position="341"/>
        <end position="348"/>
    </location>
</feature>
<feature type="repeat" description="2-3">
    <location>
        <begin position="349"/>
        <end position="356"/>
    </location>
</feature>
<feature type="repeat" description="2-4">
    <location>
        <begin position="357"/>
        <end position="364"/>
    </location>
</feature>
<feature type="repeat" description="2-5">
    <location>
        <begin position="365"/>
        <end position="372"/>
    </location>
</feature>
<feature type="repeat" description="2-6">
    <location>
        <begin position="373"/>
        <end position="380"/>
    </location>
</feature>
<feature type="repeat" description="2-7">
    <location>
        <begin position="381"/>
        <end position="388"/>
    </location>
</feature>
<feature type="repeat" description="2-8">
    <location>
        <begin position="389"/>
        <end position="396"/>
    </location>
</feature>
<feature type="repeat" description="2-9">
    <location>
        <begin position="397"/>
        <end position="405"/>
    </location>
</feature>
<feature type="repeat" description="2-10">
    <location>
        <begin position="406"/>
        <end position="413"/>
    </location>
</feature>
<feature type="domain" description="LysM" evidence="5">
    <location>
        <begin position="413"/>
        <end position="457"/>
    </location>
</feature>
<feature type="repeat" description="2-11">
    <location>
        <begin position="414"/>
        <end position="421"/>
    </location>
</feature>
<feature type="repeat" description="2-12">
    <location>
        <begin position="422"/>
        <end position="429"/>
    </location>
</feature>
<feature type="region of interest" description="Disordered" evidence="6">
    <location>
        <begin position="318"/>
        <end position="424"/>
    </location>
</feature>
<feature type="region of interest" description="12 X 8 AA approximate tandem repeats">
    <location>
        <begin position="333"/>
        <end position="408"/>
    </location>
</feature>
<feature type="region of interest" description="Disordered" evidence="6">
    <location>
        <begin position="459"/>
        <end position="479"/>
    </location>
</feature>
<feature type="short sequence motif" description="YSIRK-G/S signaling motif" evidence="2">
    <location>
        <begin position="7"/>
        <end position="18"/>
    </location>
</feature>
<feature type="short sequence motif" description="LPXTG sorting signal" evidence="4">
    <location>
        <begin position="474"/>
        <end position="478"/>
    </location>
</feature>
<feature type="compositionally biased region" description="Basic and acidic residues" evidence="6">
    <location>
        <begin position="318"/>
        <end position="412"/>
    </location>
</feature>
<feature type="modified residue" description="Pentaglycyl murein peptidoglycan amidated threonine" evidence="4">
    <location>
        <position position="477"/>
    </location>
</feature>
<feature type="sequence conflict" description="In Ref. 2; AA sequence." evidence="7" ref="2">
    <original>K</original>
    <variation>D</variation>
    <location>
        <position position="273"/>
    </location>
</feature>
<feature type="helix" evidence="21">
    <location>
        <begin position="41"/>
        <end position="52"/>
    </location>
</feature>
<feature type="strand" evidence="15">
    <location>
        <begin position="54"/>
        <end position="56"/>
    </location>
</feature>
<feature type="helix" evidence="21">
    <location>
        <begin position="58"/>
        <end position="70"/>
    </location>
</feature>
<feature type="helix" evidence="21">
    <location>
        <begin position="72"/>
        <end position="74"/>
    </location>
</feature>
<feature type="helix" evidence="21">
    <location>
        <begin position="75"/>
        <end position="100"/>
    </location>
</feature>
<feature type="helix" evidence="20">
    <location>
        <begin position="102"/>
        <end position="112"/>
    </location>
</feature>
<feature type="helix" evidence="20">
    <location>
        <begin position="119"/>
        <end position="131"/>
    </location>
</feature>
<feature type="helix" evidence="20">
    <location>
        <begin position="133"/>
        <end position="135"/>
    </location>
</feature>
<feature type="helix" evidence="20">
    <location>
        <begin position="136"/>
        <end position="148"/>
    </location>
</feature>
<feature type="helix" evidence="18">
    <location>
        <begin position="160"/>
        <end position="171"/>
    </location>
</feature>
<feature type="helix" evidence="18">
    <location>
        <begin position="177"/>
        <end position="189"/>
    </location>
</feature>
<feature type="helix" evidence="18">
    <location>
        <begin position="191"/>
        <end position="193"/>
    </location>
</feature>
<feature type="helix" evidence="18">
    <location>
        <begin position="194"/>
        <end position="207"/>
    </location>
</feature>
<feature type="helix" evidence="18">
    <location>
        <begin position="218"/>
        <end position="229"/>
    </location>
</feature>
<feature type="strand" evidence="16">
    <location>
        <begin position="231"/>
        <end position="233"/>
    </location>
</feature>
<feature type="helix" evidence="18">
    <location>
        <begin position="235"/>
        <end position="247"/>
    </location>
</feature>
<feature type="helix" evidence="18">
    <location>
        <begin position="249"/>
        <end position="251"/>
    </location>
</feature>
<feature type="helix" evidence="18">
    <location>
        <begin position="252"/>
        <end position="265"/>
    </location>
</feature>
<feature type="helix" evidence="17">
    <location>
        <begin position="276"/>
        <end position="287"/>
    </location>
</feature>
<feature type="strand" evidence="19">
    <location>
        <begin position="289"/>
        <end position="291"/>
    </location>
</feature>
<feature type="helix" evidence="17">
    <location>
        <begin position="293"/>
        <end position="305"/>
    </location>
</feature>
<feature type="helix" evidence="17">
    <location>
        <begin position="307"/>
        <end position="309"/>
    </location>
</feature>
<feature type="helix" evidence="17">
    <location>
        <begin position="310"/>
        <end position="323"/>
    </location>
</feature>
<accession>P38507</accession>
<keyword id="KW-0002">3D-structure</keyword>
<keyword id="KW-0134">Cell wall</keyword>
<keyword id="KW-0903">Direct protein sequencing</keyword>
<keyword id="KW-0390">IgG-binding protein</keyword>
<keyword id="KW-0572">Peptidoglycan-anchor</keyword>
<keyword id="KW-0677">Repeat</keyword>
<keyword id="KW-0964">Secreted</keyword>
<keyword id="KW-0732">Signal</keyword>
<keyword id="KW-0843">Virulence</keyword>
<sequence length="508" mass="55439">MKKKNIYSIRKLGVGIASVTLGTLLISGGVTPAANAAQHDEAQQNAFYQVLNMPNLNADQRNGFIQSLKDDPSQSANVLGEAQKLNDSQAPKADAQQNKFNKDQQSAFYEILNMPNLNEEQRNGFIQSLKDDPSQSTNVLGEAKKLNESQAPKADNNFNKEQQNAFYEILNMPNLNEEQRNGFIQSLKDDPSQSANLLAEAKKLNESQAPKADNKFNKEQQNAFYEILHLPNLNEEQRNGFIQSLKDDPSQSANLLAEAKKLNDAQAPKADNKFNKEQQNAFYEILHLPNLTEEQRNGFIQSLKDDPSVSKEILAEAKKLNDAQAPKEEDNNKPGKEDGNKPGKEDGNKPGKEDNKKPGKEDGNKPGKEDNKKPGKEDGNKPGKEDGNKPGKEDGNKPGKEDGNKPGKEDGNGVHVVKPGDTVNDIAKANGTTADKIAADNKLADKNMIKPGQELVVDKKQPANHADANKAQALPETGEENPFIGTTVFGGLSLALGAALLAGRRREL</sequence>